<sequence>MAGRPLHAFEVVATRHLAPHMVRVVLGGSGFDTFVPSDFTDSYIKLVFVDDDVDVGRLPRPLTLDSFADLPTAKRPPVRTMTVRHVDAAAREIAVDIVLHGEHGVAGPWAAGAQRGQPIYLMGPGGAYAPDPAADWHLLAGDESAIPAIAAALEALPPDAIGRAFIEVAGPDDEIGLTAPDAVEVNWVYRGGRADLVPEDRAGDHAPLIEAVTTTAWLPGQVHVFIHGEAQAVMHNLRPYVRNERGVDAKWASSISGYWRRGRTEEMFRKWKKELAEAEAGTH</sequence>
<keyword id="KW-1185">Reference proteome</keyword>
<name>Y2895_MYCTO</name>
<comment type="sequence caution" evidence="2">
    <conflict type="erroneous initiation">
        <sequence resource="EMBL-CDS" id="AAK47289"/>
    </conflict>
</comment>
<reference key="1">
    <citation type="journal article" date="2002" name="J. Bacteriol.">
        <title>Whole-genome comparison of Mycobacterium tuberculosis clinical and laboratory strains.</title>
        <authorList>
            <person name="Fleischmann R.D."/>
            <person name="Alland D."/>
            <person name="Eisen J.A."/>
            <person name="Carpenter L."/>
            <person name="White O."/>
            <person name="Peterson J.D."/>
            <person name="DeBoy R.T."/>
            <person name="Dodson R.J."/>
            <person name="Gwinn M.L."/>
            <person name="Haft D.H."/>
            <person name="Hickey E.K."/>
            <person name="Kolonay J.F."/>
            <person name="Nelson W.C."/>
            <person name="Umayam L.A."/>
            <person name="Ermolaeva M.D."/>
            <person name="Salzberg S.L."/>
            <person name="Delcher A."/>
            <person name="Utterback T.R."/>
            <person name="Weidman J.F."/>
            <person name="Khouri H.M."/>
            <person name="Gill J."/>
            <person name="Mikula A."/>
            <person name="Bishai W."/>
            <person name="Jacobs W.R. Jr."/>
            <person name="Venter J.C."/>
            <person name="Fraser C.M."/>
        </authorList>
    </citation>
    <scope>NUCLEOTIDE SEQUENCE [LARGE SCALE GENOMIC DNA]</scope>
    <source>
        <strain>CDC 1551 / Oshkosh</strain>
    </source>
</reference>
<dbReference type="EMBL" id="AE000516">
    <property type="protein sequence ID" value="AAK47289.1"/>
    <property type="status" value="ALT_INIT"/>
    <property type="molecule type" value="Genomic_DNA"/>
</dbReference>
<dbReference type="PIR" id="B70926">
    <property type="entry name" value="B70926"/>
</dbReference>
<dbReference type="RefSeq" id="WP_003900590.1">
    <property type="nucleotide sequence ID" value="NZ_KK341227.1"/>
</dbReference>
<dbReference type="SMR" id="P9WL30"/>
<dbReference type="KEGG" id="mtc:MT2963"/>
<dbReference type="PATRIC" id="fig|83331.31.peg.3203"/>
<dbReference type="HOGENOM" id="CLU_040923_3_0_11"/>
<dbReference type="Proteomes" id="UP000001020">
    <property type="component" value="Chromosome"/>
</dbReference>
<dbReference type="GO" id="GO:0016491">
    <property type="term" value="F:oxidoreductase activity"/>
    <property type="evidence" value="ECO:0007669"/>
    <property type="project" value="InterPro"/>
</dbReference>
<dbReference type="CDD" id="cd06193">
    <property type="entry name" value="siderophore_interacting"/>
    <property type="match status" value="1"/>
</dbReference>
<dbReference type="FunFam" id="3.40.50.80:FF:000038">
    <property type="entry name" value="Vibriobactin utilization protein ViuB"/>
    <property type="match status" value="1"/>
</dbReference>
<dbReference type="Gene3D" id="3.40.50.80">
    <property type="entry name" value="Nucleotide-binding domain of ferredoxin-NADP reductase (FNR) module"/>
    <property type="match status" value="1"/>
</dbReference>
<dbReference type="Gene3D" id="2.40.30.10">
    <property type="entry name" value="Translation factors"/>
    <property type="match status" value="1"/>
</dbReference>
<dbReference type="InterPro" id="IPR013113">
    <property type="entry name" value="FAD-bd_9_SIP"/>
</dbReference>
<dbReference type="InterPro" id="IPR017927">
    <property type="entry name" value="FAD-bd_FR_type"/>
</dbReference>
<dbReference type="InterPro" id="IPR039261">
    <property type="entry name" value="FNR_nucleotide-bd"/>
</dbReference>
<dbReference type="InterPro" id="IPR017938">
    <property type="entry name" value="Riboflavin_synthase-like_b-brl"/>
</dbReference>
<dbReference type="InterPro" id="IPR007037">
    <property type="entry name" value="SIP_C"/>
</dbReference>
<dbReference type="InterPro" id="IPR039374">
    <property type="entry name" value="SIP_fam"/>
</dbReference>
<dbReference type="PANTHER" id="PTHR30157">
    <property type="entry name" value="FERRIC REDUCTASE, NADPH-DEPENDENT"/>
    <property type="match status" value="1"/>
</dbReference>
<dbReference type="PANTHER" id="PTHR30157:SF0">
    <property type="entry name" value="NADPH-DEPENDENT FERRIC-CHELATE REDUCTASE"/>
    <property type="match status" value="1"/>
</dbReference>
<dbReference type="Pfam" id="PF08021">
    <property type="entry name" value="FAD_binding_9"/>
    <property type="match status" value="1"/>
</dbReference>
<dbReference type="Pfam" id="PF04954">
    <property type="entry name" value="SIP"/>
    <property type="match status" value="1"/>
</dbReference>
<dbReference type="SUPFAM" id="SSF63380">
    <property type="entry name" value="Riboflavin synthase domain-like"/>
    <property type="match status" value="1"/>
</dbReference>
<dbReference type="PROSITE" id="PS51384">
    <property type="entry name" value="FAD_FR"/>
    <property type="match status" value="1"/>
</dbReference>
<accession>P9WL30</accession>
<accession>L0TDV8</accession>
<accession>P65049</accession>
<accession>Q10816</accession>
<feature type="chain" id="PRO_0000427550" description="Uncharacterized protein MT2963">
    <location>
        <begin position="1"/>
        <end position="283"/>
    </location>
</feature>
<feature type="domain" description="FAD-binding FR-type" evidence="1">
    <location>
        <begin position="4"/>
        <end position="131"/>
    </location>
</feature>
<organism>
    <name type="scientific">Mycobacterium tuberculosis (strain CDC 1551 / Oshkosh)</name>
    <dbReference type="NCBI Taxonomy" id="83331"/>
    <lineage>
        <taxon>Bacteria</taxon>
        <taxon>Bacillati</taxon>
        <taxon>Actinomycetota</taxon>
        <taxon>Actinomycetes</taxon>
        <taxon>Mycobacteriales</taxon>
        <taxon>Mycobacteriaceae</taxon>
        <taxon>Mycobacterium</taxon>
        <taxon>Mycobacterium tuberculosis complex</taxon>
    </lineage>
</organism>
<protein>
    <recommendedName>
        <fullName>Uncharacterized protein MT2963</fullName>
    </recommendedName>
</protein>
<evidence type="ECO:0000255" key="1">
    <source>
        <dbReference type="PROSITE-ProRule" id="PRU00716"/>
    </source>
</evidence>
<evidence type="ECO:0000305" key="2"/>
<proteinExistence type="predicted"/>
<gene>
    <name type="ordered locus">MT2963</name>
</gene>